<feature type="chain" id="PRO_0000087456" description="Gem-associated protein 2">
    <location>
        <begin position="1"/>
        <end position="269"/>
    </location>
</feature>
<feature type="modified residue" description="Phosphoserine" evidence="2">
    <location>
        <position position="70"/>
    </location>
</feature>
<feature type="modified residue" description="Phosphoserine" evidence="2">
    <location>
        <position position="155"/>
    </location>
</feature>
<feature type="sequence conflict" description="In Ref. 1; BAB24321." evidence="3" ref="1">
    <original>D</original>
    <variation>E</variation>
    <location>
        <position position="241"/>
    </location>
</feature>
<comment type="function">
    <text evidence="2">The SMN complex catalyzes the assembly of small nuclear ribonucleoproteins (snRNPs), the building blocks of the spliceosome, and thereby plays an important role in the splicing of cellular pre-mRNAs (By similarity). Most spliceosomal snRNPs contain a common set of Sm proteins SNRPB, SNRPD1, SNRPD2, SNRPD3, SNRPE, SNRPF and SNRPG that assemble in a heptameric protein ring on the Sm site of the small nuclear RNA to form the core snRNP (Sm core) (By similarity). In the cytosol, the Sm proteins SNRPD1, SNRPD2, SNRPE, SNRPF and SNRPG (5Sm) are trapped in an inactive 6S pICln-Sm complex by the chaperone CLNS1A that controls the assembly of the core snRNP (By similarity). To assemble core snRNPs, the SMN complex accepts the trapped 5Sm proteins from CLNS1A (By similarity). Binding of snRNA inside 5Sm ultimately triggers eviction of the SMN complex, thereby allowing binding of SNRPD3 and SNRPB to complete assembly of the core snRNP (By similarity). Within the SMN complex, GEMIN2 constrains the conformation of 5Sm, thereby promoting 5Sm binding to snRNA containing the snRNP code (a nonameric Sm site and a 3'-adjacent stem-loop), thus preventing progression of assembly until a cognate substrate is bound (By similarity).</text>
</comment>
<comment type="subunit">
    <text evidence="2">Monomer (By similarity). Part of the core SMN complex that contains SMN1, GEMIN2/SIP1, DDX20/GEMIN3, GEMIN4, GEMIN5, GEMIN6, GEMIN7, GEMIN8 and STRAP/UNRIP. Part of the SMN-Sm complex that contains SMN1, GEMIN2/SIP1, DDX20/GEMIN3, GEMIN4, GEMIN5, GEMIN6, GEMIN7, GEMIN8, STRAP/UNRIP and the Sm proteins SNRPB, SNRPD1, SNRPD2, SNRPD3, SNRPE, SNRPF and SNRPG (By similarity). Interacts with GEMIN5; the interaction is direct (By similarity). Interacts (via C-terminus) with SMN1; the interaction is direct (By similarity). Interacts with SNRPD1; the interaction is direct (By similarity). Interacts with SNRPD2; the interaction is direct (By similarity). Interacts (via N-terminus) with SNRPF; the interaction is direct (By similarity). Interacts (via N-terminus) with SNRPE; the interaction is direct (By similarity). Interacts (via N-terminus) with SNRPG; the interaction is direct (By similarity).</text>
</comment>
<comment type="subcellular location">
    <subcellularLocation>
        <location evidence="1">Nucleus</location>
        <location evidence="1">Gem</location>
    </subcellularLocation>
    <subcellularLocation>
        <location evidence="1">Cytoplasm</location>
    </subcellularLocation>
    <text evidence="1">Localized in subnuclear structures next to coiled bodies, called gems, which are highly enriched in spliceosomal snRNPs. Also found in the cytoplasm (By similarity).</text>
</comment>
<comment type="similarity">
    <text evidence="3">Belongs to the gemin-2 family.</text>
</comment>
<dbReference type="EMBL" id="AK005928">
    <property type="protein sequence ID" value="BAB24321.1"/>
    <property type="molecule type" value="mRNA"/>
</dbReference>
<dbReference type="EMBL" id="AK007515">
    <property type="protein sequence ID" value="BAB25083.1"/>
    <property type="molecule type" value="mRNA"/>
</dbReference>
<dbReference type="EMBL" id="AK013414">
    <property type="protein sequence ID" value="BAB28842.1"/>
    <property type="molecule type" value="mRNA"/>
</dbReference>
<dbReference type="CCDS" id="CCDS36457.1"/>
<dbReference type="RefSeq" id="NP_079932.2">
    <property type="nucleotide sequence ID" value="NM_025656.5"/>
</dbReference>
<dbReference type="SMR" id="Q9CQQ4"/>
<dbReference type="BioGRID" id="211588">
    <property type="interactions" value="2"/>
</dbReference>
<dbReference type="FunCoup" id="Q9CQQ4">
    <property type="interactions" value="3142"/>
</dbReference>
<dbReference type="IntAct" id="Q9CQQ4">
    <property type="interactions" value="3"/>
</dbReference>
<dbReference type="STRING" id="10090.ENSMUSP00000021379"/>
<dbReference type="iPTMnet" id="Q9CQQ4"/>
<dbReference type="PhosphoSitePlus" id="Q9CQQ4"/>
<dbReference type="SwissPalm" id="Q9CQQ4"/>
<dbReference type="PaxDb" id="10090-ENSMUSP00000021379"/>
<dbReference type="PeptideAtlas" id="Q9CQQ4"/>
<dbReference type="ProteomicsDB" id="268861"/>
<dbReference type="Pumba" id="Q9CQQ4"/>
<dbReference type="Antibodypedia" id="4218">
    <property type="antibodies" value="350 antibodies from 40 providers"/>
</dbReference>
<dbReference type="DNASU" id="66603"/>
<dbReference type="Ensembl" id="ENSMUST00000021379.8">
    <property type="protein sequence ID" value="ENSMUSP00000021379.7"/>
    <property type="gene ID" value="ENSMUSG00000060121.16"/>
</dbReference>
<dbReference type="GeneID" id="66603"/>
<dbReference type="KEGG" id="mmu:66603"/>
<dbReference type="UCSC" id="uc007npx.2">
    <property type="organism name" value="mouse"/>
</dbReference>
<dbReference type="AGR" id="MGI:1913853"/>
<dbReference type="CTD" id="8487"/>
<dbReference type="MGI" id="MGI:1913853">
    <property type="gene designation" value="Gemin2"/>
</dbReference>
<dbReference type="VEuPathDB" id="HostDB:ENSMUSG00000060121"/>
<dbReference type="eggNOG" id="ENOG502QPK4">
    <property type="taxonomic scope" value="Eukaryota"/>
</dbReference>
<dbReference type="GeneTree" id="ENSGT00390000013814"/>
<dbReference type="HOGENOM" id="CLU_053222_0_0_1"/>
<dbReference type="InParanoid" id="Q9CQQ4"/>
<dbReference type="OMA" id="PHKCLLP"/>
<dbReference type="OrthoDB" id="428895at2759"/>
<dbReference type="PhylomeDB" id="Q9CQQ4"/>
<dbReference type="TreeFam" id="TF105864"/>
<dbReference type="Reactome" id="R-MMU-191859">
    <property type="pathway name" value="snRNP Assembly"/>
</dbReference>
<dbReference type="BioGRID-ORCS" id="66603">
    <property type="hits" value="21 hits in 78 CRISPR screens"/>
</dbReference>
<dbReference type="ChiTaRS" id="Gemin2">
    <property type="organism name" value="mouse"/>
</dbReference>
<dbReference type="PRO" id="PR:Q9CQQ4"/>
<dbReference type="Proteomes" id="UP000000589">
    <property type="component" value="Chromosome 12"/>
</dbReference>
<dbReference type="RNAct" id="Q9CQQ4">
    <property type="molecule type" value="protein"/>
</dbReference>
<dbReference type="Bgee" id="ENSMUSG00000060121">
    <property type="expression patterns" value="Expressed in blastoderm cell in morula and 258 other cell types or tissues"/>
</dbReference>
<dbReference type="GO" id="GO:0005737">
    <property type="term" value="C:cytoplasm"/>
    <property type="evidence" value="ECO:0000314"/>
    <property type="project" value="MGI"/>
</dbReference>
<dbReference type="GO" id="GO:0005829">
    <property type="term" value="C:cytosol"/>
    <property type="evidence" value="ECO:0000250"/>
    <property type="project" value="UniProtKB"/>
</dbReference>
<dbReference type="GO" id="GO:0097504">
    <property type="term" value="C:Gemini of Cajal bodies"/>
    <property type="evidence" value="ECO:0000250"/>
    <property type="project" value="UniProtKB"/>
</dbReference>
<dbReference type="GO" id="GO:0005730">
    <property type="term" value="C:nucleolus"/>
    <property type="evidence" value="ECO:0007669"/>
    <property type="project" value="Ensembl"/>
</dbReference>
<dbReference type="GO" id="GO:0005634">
    <property type="term" value="C:nucleus"/>
    <property type="evidence" value="ECO:0000314"/>
    <property type="project" value="MGI"/>
</dbReference>
<dbReference type="GO" id="GO:0032797">
    <property type="term" value="C:SMN complex"/>
    <property type="evidence" value="ECO:0000250"/>
    <property type="project" value="UniProtKB"/>
</dbReference>
<dbReference type="GO" id="GO:0034719">
    <property type="term" value="C:SMN-Sm protein complex"/>
    <property type="evidence" value="ECO:0000250"/>
    <property type="project" value="UniProtKB"/>
</dbReference>
<dbReference type="GO" id="GO:0005681">
    <property type="term" value="C:spliceosomal complex"/>
    <property type="evidence" value="ECO:0007669"/>
    <property type="project" value="InterPro"/>
</dbReference>
<dbReference type="GO" id="GO:0000245">
    <property type="term" value="P:spliceosomal complex assembly"/>
    <property type="evidence" value="ECO:0007669"/>
    <property type="project" value="InterPro"/>
</dbReference>
<dbReference type="GO" id="GO:0000387">
    <property type="term" value="P:spliceosomal snRNP assembly"/>
    <property type="evidence" value="ECO:0000250"/>
    <property type="project" value="UniProtKB"/>
</dbReference>
<dbReference type="FunFam" id="1.20.58.1070:FF:000001">
    <property type="entry name" value="Gem-associated protein 2"/>
    <property type="match status" value="1"/>
</dbReference>
<dbReference type="Gene3D" id="1.20.5.220">
    <property type="match status" value="1"/>
</dbReference>
<dbReference type="Gene3D" id="1.20.58.1070">
    <property type="match status" value="1"/>
</dbReference>
<dbReference type="InterPro" id="IPR017364">
    <property type="entry name" value="GEMIN2"/>
</dbReference>
<dbReference type="InterPro" id="IPR035426">
    <property type="entry name" value="Gemin2/Brr1"/>
</dbReference>
<dbReference type="PANTHER" id="PTHR12794:SF0">
    <property type="entry name" value="GEM-ASSOCIATED PROTEIN 2"/>
    <property type="match status" value="1"/>
</dbReference>
<dbReference type="PANTHER" id="PTHR12794">
    <property type="entry name" value="GEMIN2"/>
    <property type="match status" value="1"/>
</dbReference>
<dbReference type="Pfam" id="PF04938">
    <property type="entry name" value="SIP1"/>
    <property type="match status" value="1"/>
</dbReference>
<dbReference type="PIRSF" id="PIRSF038038">
    <property type="entry name" value="SMN_Gemin2"/>
    <property type="match status" value="1"/>
</dbReference>
<keyword id="KW-0963">Cytoplasm</keyword>
<keyword id="KW-0507">mRNA processing</keyword>
<keyword id="KW-0508">mRNA splicing</keyword>
<keyword id="KW-0539">Nucleus</keyword>
<keyword id="KW-0597">Phosphoprotein</keyword>
<keyword id="KW-1185">Reference proteome</keyword>
<organism>
    <name type="scientific">Mus musculus</name>
    <name type="common">Mouse</name>
    <dbReference type="NCBI Taxonomy" id="10090"/>
    <lineage>
        <taxon>Eukaryota</taxon>
        <taxon>Metazoa</taxon>
        <taxon>Chordata</taxon>
        <taxon>Craniata</taxon>
        <taxon>Vertebrata</taxon>
        <taxon>Euteleostomi</taxon>
        <taxon>Mammalia</taxon>
        <taxon>Eutheria</taxon>
        <taxon>Euarchontoglires</taxon>
        <taxon>Glires</taxon>
        <taxon>Rodentia</taxon>
        <taxon>Myomorpha</taxon>
        <taxon>Muroidea</taxon>
        <taxon>Muridae</taxon>
        <taxon>Murinae</taxon>
        <taxon>Mus</taxon>
        <taxon>Mus</taxon>
    </lineage>
</organism>
<sequence>MAWVPAESAVEELMPRLLPVEPCDLTEGFDPSVPPRTPQEYLRRVQIEAAQCPDVVVAQIDPKKLKRKQSVNISLSGCQPAPEGYSPTLQWQQQQVAHFSTVRQSVHKHRNHWKSQQLDSNVAMPKSEDEEGWKKFCLGERLCAEGATGPSTEESPGIDYVQVGFPPLLSIVSRMNQTTITSVLEYLSNWFGERDFTPELGRWFYALLACLEKPLLPEAHSLIRQLARRCSEVRLLVGSKDDERVPALNLLICLVSRYFDQRDLADEPS</sequence>
<evidence type="ECO:0000250" key="1"/>
<evidence type="ECO:0000250" key="2">
    <source>
        <dbReference type="UniProtKB" id="O14893"/>
    </source>
</evidence>
<evidence type="ECO:0000305" key="3"/>
<evidence type="ECO:0000312" key="4">
    <source>
        <dbReference type="MGI" id="MGI:1913853"/>
    </source>
</evidence>
<reference key="1">
    <citation type="journal article" date="2005" name="Science">
        <title>The transcriptional landscape of the mammalian genome.</title>
        <authorList>
            <person name="Carninci P."/>
            <person name="Kasukawa T."/>
            <person name="Katayama S."/>
            <person name="Gough J."/>
            <person name="Frith M.C."/>
            <person name="Maeda N."/>
            <person name="Oyama R."/>
            <person name="Ravasi T."/>
            <person name="Lenhard B."/>
            <person name="Wells C."/>
            <person name="Kodzius R."/>
            <person name="Shimokawa K."/>
            <person name="Bajic V.B."/>
            <person name="Brenner S.E."/>
            <person name="Batalov S."/>
            <person name="Forrest A.R."/>
            <person name="Zavolan M."/>
            <person name="Davis M.J."/>
            <person name="Wilming L.G."/>
            <person name="Aidinis V."/>
            <person name="Allen J.E."/>
            <person name="Ambesi-Impiombato A."/>
            <person name="Apweiler R."/>
            <person name="Aturaliya R.N."/>
            <person name="Bailey T.L."/>
            <person name="Bansal M."/>
            <person name="Baxter L."/>
            <person name="Beisel K.W."/>
            <person name="Bersano T."/>
            <person name="Bono H."/>
            <person name="Chalk A.M."/>
            <person name="Chiu K.P."/>
            <person name="Choudhary V."/>
            <person name="Christoffels A."/>
            <person name="Clutterbuck D.R."/>
            <person name="Crowe M.L."/>
            <person name="Dalla E."/>
            <person name="Dalrymple B.P."/>
            <person name="de Bono B."/>
            <person name="Della Gatta G."/>
            <person name="di Bernardo D."/>
            <person name="Down T."/>
            <person name="Engstrom P."/>
            <person name="Fagiolini M."/>
            <person name="Faulkner G."/>
            <person name="Fletcher C.F."/>
            <person name="Fukushima T."/>
            <person name="Furuno M."/>
            <person name="Futaki S."/>
            <person name="Gariboldi M."/>
            <person name="Georgii-Hemming P."/>
            <person name="Gingeras T.R."/>
            <person name="Gojobori T."/>
            <person name="Green R.E."/>
            <person name="Gustincich S."/>
            <person name="Harbers M."/>
            <person name="Hayashi Y."/>
            <person name="Hensch T.K."/>
            <person name="Hirokawa N."/>
            <person name="Hill D."/>
            <person name="Huminiecki L."/>
            <person name="Iacono M."/>
            <person name="Ikeo K."/>
            <person name="Iwama A."/>
            <person name="Ishikawa T."/>
            <person name="Jakt M."/>
            <person name="Kanapin A."/>
            <person name="Katoh M."/>
            <person name="Kawasawa Y."/>
            <person name="Kelso J."/>
            <person name="Kitamura H."/>
            <person name="Kitano H."/>
            <person name="Kollias G."/>
            <person name="Krishnan S.P."/>
            <person name="Kruger A."/>
            <person name="Kummerfeld S.K."/>
            <person name="Kurochkin I.V."/>
            <person name="Lareau L.F."/>
            <person name="Lazarevic D."/>
            <person name="Lipovich L."/>
            <person name="Liu J."/>
            <person name="Liuni S."/>
            <person name="McWilliam S."/>
            <person name="Madan Babu M."/>
            <person name="Madera M."/>
            <person name="Marchionni L."/>
            <person name="Matsuda H."/>
            <person name="Matsuzawa S."/>
            <person name="Miki H."/>
            <person name="Mignone F."/>
            <person name="Miyake S."/>
            <person name="Morris K."/>
            <person name="Mottagui-Tabar S."/>
            <person name="Mulder N."/>
            <person name="Nakano N."/>
            <person name="Nakauchi H."/>
            <person name="Ng P."/>
            <person name="Nilsson R."/>
            <person name="Nishiguchi S."/>
            <person name="Nishikawa S."/>
            <person name="Nori F."/>
            <person name="Ohara O."/>
            <person name="Okazaki Y."/>
            <person name="Orlando V."/>
            <person name="Pang K.C."/>
            <person name="Pavan W.J."/>
            <person name="Pavesi G."/>
            <person name="Pesole G."/>
            <person name="Petrovsky N."/>
            <person name="Piazza S."/>
            <person name="Reed J."/>
            <person name="Reid J.F."/>
            <person name="Ring B.Z."/>
            <person name="Ringwald M."/>
            <person name="Rost B."/>
            <person name="Ruan Y."/>
            <person name="Salzberg S.L."/>
            <person name="Sandelin A."/>
            <person name="Schneider C."/>
            <person name="Schoenbach C."/>
            <person name="Sekiguchi K."/>
            <person name="Semple C.A."/>
            <person name="Seno S."/>
            <person name="Sessa L."/>
            <person name="Sheng Y."/>
            <person name="Shibata Y."/>
            <person name="Shimada H."/>
            <person name="Shimada K."/>
            <person name="Silva D."/>
            <person name="Sinclair B."/>
            <person name="Sperling S."/>
            <person name="Stupka E."/>
            <person name="Sugiura K."/>
            <person name="Sultana R."/>
            <person name="Takenaka Y."/>
            <person name="Taki K."/>
            <person name="Tammoja K."/>
            <person name="Tan S.L."/>
            <person name="Tang S."/>
            <person name="Taylor M.S."/>
            <person name="Tegner J."/>
            <person name="Teichmann S.A."/>
            <person name="Ueda H.R."/>
            <person name="van Nimwegen E."/>
            <person name="Verardo R."/>
            <person name="Wei C.L."/>
            <person name="Yagi K."/>
            <person name="Yamanishi H."/>
            <person name="Zabarovsky E."/>
            <person name="Zhu S."/>
            <person name="Zimmer A."/>
            <person name="Hide W."/>
            <person name="Bult C."/>
            <person name="Grimmond S.M."/>
            <person name="Teasdale R.D."/>
            <person name="Liu E.T."/>
            <person name="Brusic V."/>
            <person name="Quackenbush J."/>
            <person name="Wahlestedt C."/>
            <person name="Mattick J.S."/>
            <person name="Hume D.A."/>
            <person name="Kai C."/>
            <person name="Sasaki D."/>
            <person name="Tomaru Y."/>
            <person name="Fukuda S."/>
            <person name="Kanamori-Katayama M."/>
            <person name="Suzuki M."/>
            <person name="Aoki J."/>
            <person name="Arakawa T."/>
            <person name="Iida J."/>
            <person name="Imamura K."/>
            <person name="Itoh M."/>
            <person name="Kato T."/>
            <person name="Kawaji H."/>
            <person name="Kawagashira N."/>
            <person name="Kawashima T."/>
            <person name="Kojima M."/>
            <person name="Kondo S."/>
            <person name="Konno H."/>
            <person name="Nakano K."/>
            <person name="Ninomiya N."/>
            <person name="Nishio T."/>
            <person name="Okada M."/>
            <person name="Plessy C."/>
            <person name="Shibata K."/>
            <person name="Shiraki T."/>
            <person name="Suzuki S."/>
            <person name="Tagami M."/>
            <person name="Waki K."/>
            <person name="Watahiki A."/>
            <person name="Okamura-Oho Y."/>
            <person name="Suzuki H."/>
            <person name="Kawai J."/>
            <person name="Hayashizaki Y."/>
        </authorList>
    </citation>
    <scope>NUCLEOTIDE SEQUENCE [LARGE SCALE MRNA]</scope>
    <source>
        <strain>C57BL/6J</strain>
        <tissue>Embryo</tissue>
        <tissue>Pancreas</tissue>
        <tissue>Testis</tissue>
    </source>
</reference>
<protein>
    <recommendedName>
        <fullName>Gem-associated protein 2</fullName>
        <shortName>Gemin-2</shortName>
    </recommendedName>
    <alternativeName>
        <fullName>Component of gems 2</fullName>
    </alternativeName>
    <alternativeName>
        <fullName>Survival of motor neuron protein-interacting protein 1</fullName>
        <shortName>SMN-interacting protein 1</shortName>
    </alternativeName>
</protein>
<name>GEMI2_MOUSE</name>
<accession>Q9CQQ4</accession>
<accession>Q9DAD7</accession>
<proteinExistence type="evidence at transcript level"/>
<gene>
    <name evidence="4" type="primary">Gemin2</name>
    <name type="synonym">Sip1</name>
</gene>